<gene>
    <name type="primary">yjbC</name>
    <name type="ordered locus">BSU11490</name>
</gene>
<accession>O31601</accession>
<keyword id="KW-0012">Acyltransferase</keyword>
<keyword id="KW-0963">Cytoplasm</keyword>
<keyword id="KW-1185">Reference proteome</keyword>
<keyword id="KW-0808">Transferase</keyword>
<feature type="chain" id="PRO_0000387463" description="Putative acetyltransferase YjbC">
    <location>
        <begin position="1"/>
        <end position="192"/>
    </location>
</feature>
<feature type="domain" description="N-acetyltransferase" evidence="1">
    <location>
        <begin position="1"/>
        <end position="139"/>
    </location>
</feature>
<sequence>MNWYEKLSEYFPIEEMKSKAHMEALLKERSDIYHKDEGKHHILMFAEFDSFIFVDYLYVSKDARGQGLGGKLIAKLKKKNKPILLEVEPVDEDDTDTEKRLRFYQREHFKHAQSIGYRRRSLATNEVNKMEILYWSPKTESEEEILEAMKQTYENIHTYKDEKWYGESYEKTDEVLEIIDEEKQKNIFDQLS</sequence>
<reference key="1">
    <citation type="journal article" date="1997" name="Nature">
        <title>The complete genome sequence of the Gram-positive bacterium Bacillus subtilis.</title>
        <authorList>
            <person name="Kunst F."/>
            <person name="Ogasawara N."/>
            <person name="Moszer I."/>
            <person name="Albertini A.M."/>
            <person name="Alloni G."/>
            <person name="Azevedo V."/>
            <person name="Bertero M.G."/>
            <person name="Bessieres P."/>
            <person name="Bolotin A."/>
            <person name="Borchert S."/>
            <person name="Borriss R."/>
            <person name="Boursier L."/>
            <person name="Brans A."/>
            <person name="Braun M."/>
            <person name="Brignell S.C."/>
            <person name="Bron S."/>
            <person name="Brouillet S."/>
            <person name="Bruschi C.V."/>
            <person name="Caldwell B."/>
            <person name="Capuano V."/>
            <person name="Carter N.M."/>
            <person name="Choi S.-K."/>
            <person name="Codani J.-J."/>
            <person name="Connerton I.F."/>
            <person name="Cummings N.J."/>
            <person name="Daniel R.A."/>
            <person name="Denizot F."/>
            <person name="Devine K.M."/>
            <person name="Duesterhoeft A."/>
            <person name="Ehrlich S.D."/>
            <person name="Emmerson P.T."/>
            <person name="Entian K.-D."/>
            <person name="Errington J."/>
            <person name="Fabret C."/>
            <person name="Ferrari E."/>
            <person name="Foulger D."/>
            <person name="Fritz C."/>
            <person name="Fujita M."/>
            <person name="Fujita Y."/>
            <person name="Fuma S."/>
            <person name="Galizzi A."/>
            <person name="Galleron N."/>
            <person name="Ghim S.-Y."/>
            <person name="Glaser P."/>
            <person name="Goffeau A."/>
            <person name="Golightly E.J."/>
            <person name="Grandi G."/>
            <person name="Guiseppi G."/>
            <person name="Guy B.J."/>
            <person name="Haga K."/>
            <person name="Haiech J."/>
            <person name="Harwood C.R."/>
            <person name="Henaut A."/>
            <person name="Hilbert H."/>
            <person name="Holsappel S."/>
            <person name="Hosono S."/>
            <person name="Hullo M.-F."/>
            <person name="Itaya M."/>
            <person name="Jones L.-M."/>
            <person name="Joris B."/>
            <person name="Karamata D."/>
            <person name="Kasahara Y."/>
            <person name="Klaerr-Blanchard M."/>
            <person name="Klein C."/>
            <person name="Kobayashi Y."/>
            <person name="Koetter P."/>
            <person name="Koningstein G."/>
            <person name="Krogh S."/>
            <person name="Kumano M."/>
            <person name="Kurita K."/>
            <person name="Lapidus A."/>
            <person name="Lardinois S."/>
            <person name="Lauber J."/>
            <person name="Lazarevic V."/>
            <person name="Lee S.-M."/>
            <person name="Levine A."/>
            <person name="Liu H."/>
            <person name="Masuda S."/>
            <person name="Mauel C."/>
            <person name="Medigue C."/>
            <person name="Medina N."/>
            <person name="Mellado R.P."/>
            <person name="Mizuno M."/>
            <person name="Moestl D."/>
            <person name="Nakai S."/>
            <person name="Noback M."/>
            <person name="Noone D."/>
            <person name="O'Reilly M."/>
            <person name="Ogawa K."/>
            <person name="Ogiwara A."/>
            <person name="Oudega B."/>
            <person name="Park S.-H."/>
            <person name="Parro V."/>
            <person name="Pohl T.M."/>
            <person name="Portetelle D."/>
            <person name="Porwollik S."/>
            <person name="Prescott A.M."/>
            <person name="Presecan E."/>
            <person name="Pujic P."/>
            <person name="Purnelle B."/>
            <person name="Rapoport G."/>
            <person name="Rey M."/>
            <person name="Reynolds S."/>
            <person name="Rieger M."/>
            <person name="Rivolta C."/>
            <person name="Rocha E."/>
            <person name="Roche B."/>
            <person name="Rose M."/>
            <person name="Sadaie Y."/>
            <person name="Sato T."/>
            <person name="Scanlan E."/>
            <person name="Schleich S."/>
            <person name="Schroeter R."/>
            <person name="Scoffone F."/>
            <person name="Sekiguchi J."/>
            <person name="Sekowska A."/>
            <person name="Seror S.J."/>
            <person name="Serror P."/>
            <person name="Shin B.-S."/>
            <person name="Soldo B."/>
            <person name="Sorokin A."/>
            <person name="Tacconi E."/>
            <person name="Takagi T."/>
            <person name="Takahashi H."/>
            <person name="Takemaru K."/>
            <person name="Takeuchi M."/>
            <person name="Tamakoshi A."/>
            <person name="Tanaka T."/>
            <person name="Terpstra P."/>
            <person name="Tognoni A."/>
            <person name="Tosato V."/>
            <person name="Uchiyama S."/>
            <person name="Vandenbol M."/>
            <person name="Vannier F."/>
            <person name="Vassarotti A."/>
            <person name="Viari A."/>
            <person name="Wambutt R."/>
            <person name="Wedler E."/>
            <person name="Wedler H."/>
            <person name="Weitzenegger T."/>
            <person name="Winters P."/>
            <person name="Wipat A."/>
            <person name="Yamamoto H."/>
            <person name="Yamane K."/>
            <person name="Yasumoto K."/>
            <person name="Yata K."/>
            <person name="Yoshida K."/>
            <person name="Yoshikawa H.-F."/>
            <person name="Zumstein E."/>
            <person name="Yoshikawa H."/>
            <person name="Danchin A."/>
        </authorList>
    </citation>
    <scope>NUCLEOTIDE SEQUENCE [LARGE SCALE GENOMIC DNA]</scope>
    <source>
        <strain>168</strain>
    </source>
</reference>
<reference key="2">
    <citation type="journal article" date="2009" name="Microbiology">
        <title>From a consortium sequence to a unified sequence: the Bacillus subtilis 168 reference genome a decade later.</title>
        <authorList>
            <person name="Barbe V."/>
            <person name="Cruveiller S."/>
            <person name="Kunst F."/>
            <person name="Lenoble P."/>
            <person name="Meurice G."/>
            <person name="Sekowska A."/>
            <person name="Vallenet D."/>
            <person name="Wang T."/>
            <person name="Moszer I."/>
            <person name="Medigue C."/>
            <person name="Danchin A."/>
        </authorList>
    </citation>
    <scope>SEQUENCE REVISION TO 130</scope>
</reference>
<reference key="3">
    <citation type="journal article" date="2000" name="J. Bacteriol.">
        <title>Phosphate starvation-inducible proteins of Bacillus subtilis: proteomics and transcriptional analysis.</title>
        <authorList>
            <person name="Antelmann H."/>
            <person name="Scharf C."/>
            <person name="Hecker M."/>
        </authorList>
    </citation>
    <scope>SUBCELLULAR LOCATION</scope>
    <scope>INDUCTION BY PHOSPHATE STARVATION</scope>
    <source>
        <strain>168</strain>
    </source>
</reference>
<reference key="4">
    <citation type="journal article" date="2001" name="J. Bacteriol.">
        <title>Global analysis of the general stress response of Bacillus subtilis.</title>
        <authorList>
            <person name="Petersohn A."/>
            <person name="Brigulla M."/>
            <person name="Haas S."/>
            <person name="Hoheisel J.D."/>
            <person name="Voelker U."/>
            <person name="Hecker M."/>
        </authorList>
    </citation>
    <scope>INDUCTION</scope>
    <scope>DISRUPTION PHENOTYPE</scope>
    <source>
        <strain>168</strain>
    </source>
</reference>
<reference key="5">
    <citation type="journal article" date="2007" name="J. Bacteriol.">
        <title>SigM-responsive genes of Bacillus subtilis and their promoters.</title>
        <authorList>
            <person name="Jervis A.J."/>
            <person name="Thackray P.D."/>
            <person name="Houston C.W."/>
            <person name="Horsburgh M.J."/>
            <person name="Moir A."/>
        </authorList>
    </citation>
    <scope>INDUCTION</scope>
    <source>
        <strain>168 / 1604</strain>
    </source>
</reference>
<comment type="subcellular location">
    <subcellularLocation>
        <location evidence="2">Cytoplasm</location>
    </subcellularLocation>
</comment>
<comment type="induction">
    <text evidence="2 3 4">By different stresses, such as ethanol, salt, and phosphate starvation, in a partially sigma-B dependent manner. Transcribed under partial control of SigM ECF sigma factor (PubMed:17434969).</text>
</comment>
<comment type="disruption phenotype">
    <text evidence="3">Cells lacking this gene display decreased survival rates during salt stress conditions.</text>
</comment>
<evidence type="ECO:0000255" key="1">
    <source>
        <dbReference type="PROSITE-ProRule" id="PRU00532"/>
    </source>
</evidence>
<evidence type="ECO:0000269" key="2">
    <source>
    </source>
</evidence>
<evidence type="ECO:0000269" key="3">
    <source>
    </source>
</evidence>
<evidence type="ECO:0000269" key="4">
    <source>
    </source>
</evidence>
<dbReference type="EC" id="2.3.1.-"/>
<dbReference type="EMBL" id="AL009126">
    <property type="protein sequence ID" value="CAB13006.2"/>
    <property type="molecule type" value="Genomic_DNA"/>
</dbReference>
<dbReference type="RefSeq" id="NP_389031.2">
    <property type="nucleotide sequence ID" value="NC_000964.3"/>
</dbReference>
<dbReference type="RefSeq" id="WP_003244921.1">
    <property type="nucleotide sequence ID" value="NZ_OZ025638.1"/>
</dbReference>
<dbReference type="SMR" id="O31601"/>
<dbReference type="FunCoup" id="O31601">
    <property type="interactions" value="3"/>
</dbReference>
<dbReference type="STRING" id="224308.BSU11490"/>
<dbReference type="PaxDb" id="224308-BSU11490"/>
<dbReference type="EnsemblBacteria" id="CAB13006">
    <property type="protein sequence ID" value="CAB13006"/>
    <property type="gene ID" value="BSU_11490"/>
</dbReference>
<dbReference type="GeneID" id="939373"/>
<dbReference type="KEGG" id="bsu:BSU11490"/>
<dbReference type="PATRIC" id="fig|224308.179.peg.1236"/>
<dbReference type="eggNOG" id="COG0456">
    <property type="taxonomic scope" value="Bacteria"/>
</dbReference>
<dbReference type="InParanoid" id="O31601"/>
<dbReference type="OrthoDB" id="2425381at2"/>
<dbReference type="PhylomeDB" id="O31601"/>
<dbReference type="BioCyc" id="BSUB:BSU11490-MONOMER"/>
<dbReference type="Proteomes" id="UP000001570">
    <property type="component" value="Chromosome"/>
</dbReference>
<dbReference type="GO" id="GO:0005737">
    <property type="term" value="C:cytoplasm"/>
    <property type="evidence" value="ECO:0007669"/>
    <property type="project" value="UniProtKB-SubCell"/>
</dbReference>
<dbReference type="GO" id="GO:0016747">
    <property type="term" value="F:acyltransferase activity, transferring groups other than amino-acyl groups"/>
    <property type="evidence" value="ECO:0007669"/>
    <property type="project" value="InterPro"/>
</dbReference>
<dbReference type="CDD" id="cd04301">
    <property type="entry name" value="NAT_SF"/>
    <property type="match status" value="1"/>
</dbReference>
<dbReference type="Gene3D" id="3.40.630.30">
    <property type="match status" value="1"/>
</dbReference>
<dbReference type="InterPro" id="IPR016181">
    <property type="entry name" value="Acyl_CoA_acyltransferase"/>
</dbReference>
<dbReference type="InterPro" id="IPR000182">
    <property type="entry name" value="GNAT_dom"/>
</dbReference>
<dbReference type="Pfam" id="PF13508">
    <property type="entry name" value="Acetyltransf_7"/>
    <property type="match status" value="1"/>
</dbReference>
<dbReference type="SUPFAM" id="SSF55729">
    <property type="entry name" value="Acyl-CoA N-acyltransferases (Nat)"/>
    <property type="match status" value="1"/>
</dbReference>
<dbReference type="PROSITE" id="PS51186">
    <property type="entry name" value="GNAT"/>
    <property type="match status" value="1"/>
</dbReference>
<protein>
    <recommendedName>
        <fullName>Putative acetyltransferase YjbC</fullName>
        <ecNumber>2.3.1.-</ecNumber>
    </recommendedName>
</protein>
<organism>
    <name type="scientific">Bacillus subtilis (strain 168)</name>
    <dbReference type="NCBI Taxonomy" id="224308"/>
    <lineage>
        <taxon>Bacteria</taxon>
        <taxon>Bacillati</taxon>
        <taxon>Bacillota</taxon>
        <taxon>Bacilli</taxon>
        <taxon>Bacillales</taxon>
        <taxon>Bacillaceae</taxon>
        <taxon>Bacillus</taxon>
    </lineage>
</organism>
<proteinExistence type="evidence at transcript level"/>
<name>YJBC_BACSU</name>